<accession>P84464</accession>
<comment type="function">
    <text evidence="1">Specific inhibitor of store-operated non-voltage-gated calcium channels.</text>
</comment>
<comment type="subcellular location">
    <subcellularLocation>
        <location evidence="1">Secreted</location>
    </subcellularLocation>
</comment>
<comment type="tissue specificity">
    <text evidence="3">Expressed by the venom gland.</text>
</comment>
<comment type="mass spectrometry"/>
<feature type="peptide" id="PRO_0000044548" description="Tetrapandin-2" evidence="1">
    <location>
        <begin position="1"/>
        <end position="4"/>
    </location>
</feature>
<protein>
    <recommendedName>
        <fullName evidence="2">Tetrapandin-2</fullName>
    </recommendedName>
</protein>
<dbReference type="GO" id="GO:0005576">
    <property type="term" value="C:extracellular region"/>
    <property type="evidence" value="ECO:0007669"/>
    <property type="project" value="UniProtKB-SubCell"/>
</dbReference>
<dbReference type="GO" id="GO:0005246">
    <property type="term" value="F:calcium channel regulator activity"/>
    <property type="evidence" value="ECO:0007669"/>
    <property type="project" value="UniProtKB-KW"/>
</dbReference>
<dbReference type="GO" id="GO:0090729">
    <property type="term" value="F:toxin activity"/>
    <property type="evidence" value="ECO:0007669"/>
    <property type="project" value="UniProtKB-KW"/>
</dbReference>
<proteinExistence type="evidence at protein level"/>
<organism>
    <name type="scientific">Pandinus imperator</name>
    <name type="common">Emperor scorpion</name>
    <dbReference type="NCBI Taxonomy" id="55084"/>
    <lineage>
        <taxon>Eukaryota</taxon>
        <taxon>Metazoa</taxon>
        <taxon>Ecdysozoa</taxon>
        <taxon>Arthropoda</taxon>
        <taxon>Chelicerata</taxon>
        <taxon>Arachnida</taxon>
        <taxon>Scorpiones</taxon>
        <taxon>Iurida</taxon>
        <taxon>Scorpionoidea</taxon>
        <taxon>Scorpionidae</taxon>
        <taxon>Pandininae</taxon>
        <taxon>Pandinus</taxon>
    </lineage>
</organism>
<keyword id="KW-0108">Calcium channel impairing toxin</keyword>
<keyword id="KW-0903">Direct protein sequencing</keyword>
<keyword id="KW-0872">Ion channel impairing toxin</keyword>
<keyword id="KW-0964">Secreted</keyword>
<keyword id="KW-0800">Toxin</keyword>
<name>TPAN2_PANIM</name>
<sequence>LWKT</sequence>
<reference key="1">
    <citation type="journal article" date="2004" name="J. Biol. Chem.">
        <title>Tetrapandins, a new class of scorpion toxins that specifically inhibit store-operated calcium entry in human embryonic kidney-293 cells.</title>
        <authorList>
            <person name="Shalabi A."/>
            <person name="Zamudio F."/>
            <person name="Wu X."/>
            <person name="Scaloni A."/>
            <person name="Possani L.D."/>
            <person name="Villereal M.L."/>
        </authorList>
    </citation>
    <scope>PROTEIN SEQUENCE</scope>
    <scope>FUNCTION</scope>
    <scope>SUBCELLULAR LOCATION</scope>
    <scope>MASS SPECTROMETRY</scope>
    <source>
        <tissue>Venom</tissue>
    </source>
</reference>
<evidence type="ECO:0000269" key="1">
    <source>
    </source>
</evidence>
<evidence type="ECO:0000303" key="2">
    <source>
    </source>
</evidence>
<evidence type="ECO:0000305" key="3"/>